<proteinExistence type="inferred from homology"/>
<name>ISPH_DEHMC</name>
<dbReference type="EC" id="1.17.7.4" evidence="1"/>
<dbReference type="EMBL" id="AJ965256">
    <property type="protein sequence ID" value="CAI83351.1"/>
    <property type="molecule type" value="Genomic_DNA"/>
</dbReference>
<dbReference type="RefSeq" id="WP_011309702.1">
    <property type="nucleotide sequence ID" value="NC_007356.1"/>
</dbReference>
<dbReference type="SMR" id="Q3ZYL6"/>
<dbReference type="KEGG" id="deh:cbdbA1294"/>
<dbReference type="HOGENOM" id="CLU_027486_0_1_0"/>
<dbReference type="UniPathway" id="UPA00056">
    <property type="reaction ID" value="UER00097"/>
</dbReference>
<dbReference type="UniPathway" id="UPA00059">
    <property type="reaction ID" value="UER00105"/>
</dbReference>
<dbReference type="Proteomes" id="UP000000433">
    <property type="component" value="Chromosome"/>
</dbReference>
<dbReference type="GO" id="GO:0051539">
    <property type="term" value="F:4 iron, 4 sulfur cluster binding"/>
    <property type="evidence" value="ECO:0007669"/>
    <property type="project" value="UniProtKB-UniRule"/>
</dbReference>
<dbReference type="GO" id="GO:0051745">
    <property type="term" value="F:4-hydroxy-3-methylbut-2-enyl diphosphate reductase activity"/>
    <property type="evidence" value="ECO:0007669"/>
    <property type="project" value="UniProtKB-UniRule"/>
</dbReference>
<dbReference type="GO" id="GO:0046872">
    <property type="term" value="F:metal ion binding"/>
    <property type="evidence" value="ECO:0007669"/>
    <property type="project" value="UniProtKB-KW"/>
</dbReference>
<dbReference type="GO" id="GO:0050992">
    <property type="term" value="P:dimethylallyl diphosphate biosynthetic process"/>
    <property type="evidence" value="ECO:0007669"/>
    <property type="project" value="UniProtKB-UniRule"/>
</dbReference>
<dbReference type="GO" id="GO:0019288">
    <property type="term" value="P:isopentenyl diphosphate biosynthetic process, methylerythritol 4-phosphate pathway"/>
    <property type="evidence" value="ECO:0007669"/>
    <property type="project" value="UniProtKB-UniRule"/>
</dbReference>
<dbReference type="GO" id="GO:0016114">
    <property type="term" value="P:terpenoid biosynthetic process"/>
    <property type="evidence" value="ECO:0007669"/>
    <property type="project" value="UniProtKB-UniRule"/>
</dbReference>
<dbReference type="CDD" id="cd13944">
    <property type="entry name" value="lytB_ispH"/>
    <property type="match status" value="1"/>
</dbReference>
<dbReference type="Gene3D" id="3.40.50.11270">
    <property type="match status" value="1"/>
</dbReference>
<dbReference type="Gene3D" id="3.40.1010.20">
    <property type="entry name" value="4-hydroxy-3-methylbut-2-enyl diphosphate reductase, catalytic domain"/>
    <property type="match status" value="2"/>
</dbReference>
<dbReference type="HAMAP" id="MF_00191">
    <property type="entry name" value="IspH"/>
    <property type="match status" value="1"/>
</dbReference>
<dbReference type="InterPro" id="IPR003451">
    <property type="entry name" value="LytB/IspH"/>
</dbReference>
<dbReference type="NCBIfam" id="TIGR00216">
    <property type="entry name" value="ispH_lytB"/>
    <property type="match status" value="1"/>
</dbReference>
<dbReference type="PANTHER" id="PTHR30426">
    <property type="entry name" value="4-HYDROXY-3-METHYLBUT-2-ENYL DIPHOSPHATE REDUCTASE"/>
    <property type="match status" value="1"/>
</dbReference>
<dbReference type="PANTHER" id="PTHR30426:SF0">
    <property type="entry name" value="4-HYDROXY-3-METHYLBUT-2-ENYL DIPHOSPHATE REDUCTASE"/>
    <property type="match status" value="1"/>
</dbReference>
<dbReference type="Pfam" id="PF02401">
    <property type="entry name" value="LYTB"/>
    <property type="match status" value="1"/>
</dbReference>
<organism>
    <name type="scientific">Dehalococcoides mccartyi (strain CBDB1)</name>
    <dbReference type="NCBI Taxonomy" id="255470"/>
    <lineage>
        <taxon>Bacteria</taxon>
        <taxon>Bacillati</taxon>
        <taxon>Chloroflexota</taxon>
        <taxon>Dehalococcoidia</taxon>
        <taxon>Dehalococcoidales</taxon>
        <taxon>Dehalococcoidaceae</taxon>
        <taxon>Dehalococcoides</taxon>
    </lineage>
</organism>
<accession>Q3ZYL6</accession>
<comment type="function">
    <text evidence="1">Catalyzes the conversion of 1-hydroxy-2-methyl-2-(E)-butenyl 4-diphosphate (HMBPP) into a mixture of isopentenyl diphosphate (IPP) and dimethylallyl diphosphate (DMAPP). Acts in the terminal step of the DOXP/MEP pathway for isoprenoid precursor biosynthesis.</text>
</comment>
<comment type="catalytic activity">
    <reaction evidence="1">
        <text>isopentenyl diphosphate + 2 oxidized [2Fe-2S]-[ferredoxin] + H2O = (2E)-4-hydroxy-3-methylbut-2-enyl diphosphate + 2 reduced [2Fe-2S]-[ferredoxin] + 2 H(+)</text>
        <dbReference type="Rhea" id="RHEA:24488"/>
        <dbReference type="Rhea" id="RHEA-COMP:10000"/>
        <dbReference type="Rhea" id="RHEA-COMP:10001"/>
        <dbReference type="ChEBI" id="CHEBI:15377"/>
        <dbReference type="ChEBI" id="CHEBI:15378"/>
        <dbReference type="ChEBI" id="CHEBI:33737"/>
        <dbReference type="ChEBI" id="CHEBI:33738"/>
        <dbReference type="ChEBI" id="CHEBI:128753"/>
        <dbReference type="ChEBI" id="CHEBI:128769"/>
        <dbReference type="EC" id="1.17.7.4"/>
    </reaction>
</comment>
<comment type="catalytic activity">
    <reaction evidence="1">
        <text>dimethylallyl diphosphate + 2 oxidized [2Fe-2S]-[ferredoxin] + H2O = (2E)-4-hydroxy-3-methylbut-2-enyl diphosphate + 2 reduced [2Fe-2S]-[ferredoxin] + 2 H(+)</text>
        <dbReference type="Rhea" id="RHEA:24825"/>
        <dbReference type="Rhea" id="RHEA-COMP:10000"/>
        <dbReference type="Rhea" id="RHEA-COMP:10001"/>
        <dbReference type="ChEBI" id="CHEBI:15377"/>
        <dbReference type="ChEBI" id="CHEBI:15378"/>
        <dbReference type="ChEBI" id="CHEBI:33737"/>
        <dbReference type="ChEBI" id="CHEBI:33738"/>
        <dbReference type="ChEBI" id="CHEBI:57623"/>
        <dbReference type="ChEBI" id="CHEBI:128753"/>
        <dbReference type="EC" id="1.17.7.4"/>
    </reaction>
</comment>
<comment type="cofactor">
    <cofactor evidence="1">
        <name>[4Fe-4S] cluster</name>
        <dbReference type="ChEBI" id="CHEBI:49883"/>
    </cofactor>
    <text evidence="1">Binds 1 [4Fe-4S] cluster per subunit.</text>
</comment>
<comment type="pathway">
    <text evidence="1">Isoprenoid biosynthesis; dimethylallyl diphosphate biosynthesis; dimethylallyl diphosphate from (2E)-4-hydroxy-3-methylbutenyl diphosphate: step 1/1.</text>
</comment>
<comment type="pathway">
    <text evidence="1">Isoprenoid biosynthesis; isopentenyl diphosphate biosynthesis via DXP pathway; isopentenyl diphosphate from 1-deoxy-D-xylulose 5-phosphate: step 6/6.</text>
</comment>
<comment type="similarity">
    <text evidence="1">Belongs to the IspH family.</text>
</comment>
<feature type="chain" id="PRO_1000021113" description="4-hydroxy-3-methylbut-2-enyl diphosphate reductase">
    <location>
        <begin position="1"/>
        <end position="284"/>
    </location>
</feature>
<feature type="active site" description="Proton donor" evidence="1">
    <location>
        <position position="124"/>
    </location>
</feature>
<feature type="binding site" evidence="1">
    <location>
        <position position="12"/>
    </location>
    <ligand>
        <name>[4Fe-4S] cluster</name>
        <dbReference type="ChEBI" id="CHEBI:49883"/>
    </ligand>
</feature>
<feature type="binding site" evidence="1">
    <location>
        <position position="40"/>
    </location>
    <ligand>
        <name>(2E)-4-hydroxy-3-methylbut-2-enyl diphosphate</name>
        <dbReference type="ChEBI" id="CHEBI:128753"/>
    </ligand>
</feature>
<feature type="binding site" evidence="1">
    <location>
        <position position="40"/>
    </location>
    <ligand>
        <name>dimethylallyl diphosphate</name>
        <dbReference type="ChEBI" id="CHEBI:57623"/>
    </ligand>
</feature>
<feature type="binding site" evidence="1">
    <location>
        <position position="40"/>
    </location>
    <ligand>
        <name>isopentenyl diphosphate</name>
        <dbReference type="ChEBI" id="CHEBI:128769"/>
    </ligand>
</feature>
<feature type="binding site" evidence="1">
    <location>
        <position position="72"/>
    </location>
    <ligand>
        <name>(2E)-4-hydroxy-3-methylbut-2-enyl diphosphate</name>
        <dbReference type="ChEBI" id="CHEBI:128753"/>
    </ligand>
</feature>
<feature type="binding site" evidence="1">
    <location>
        <position position="72"/>
    </location>
    <ligand>
        <name>dimethylallyl diphosphate</name>
        <dbReference type="ChEBI" id="CHEBI:57623"/>
    </ligand>
</feature>
<feature type="binding site" evidence="1">
    <location>
        <position position="72"/>
    </location>
    <ligand>
        <name>isopentenyl diphosphate</name>
        <dbReference type="ChEBI" id="CHEBI:128769"/>
    </ligand>
</feature>
<feature type="binding site" evidence="1">
    <location>
        <position position="94"/>
    </location>
    <ligand>
        <name>[4Fe-4S] cluster</name>
        <dbReference type="ChEBI" id="CHEBI:49883"/>
    </ligand>
</feature>
<feature type="binding site" evidence="1">
    <location>
        <position position="122"/>
    </location>
    <ligand>
        <name>(2E)-4-hydroxy-3-methylbut-2-enyl diphosphate</name>
        <dbReference type="ChEBI" id="CHEBI:128753"/>
    </ligand>
</feature>
<feature type="binding site" evidence="1">
    <location>
        <position position="122"/>
    </location>
    <ligand>
        <name>dimethylallyl diphosphate</name>
        <dbReference type="ChEBI" id="CHEBI:57623"/>
    </ligand>
</feature>
<feature type="binding site" evidence="1">
    <location>
        <position position="122"/>
    </location>
    <ligand>
        <name>isopentenyl diphosphate</name>
        <dbReference type="ChEBI" id="CHEBI:128769"/>
    </ligand>
</feature>
<feature type="binding site" evidence="1">
    <location>
        <position position="161"/>
    </location>
    <ligand>
        <name>(2E)-4-hydroxy-3-methylbut-2-enyl diphosphate</name>
        <dbReference type="ChEBI" id="CHEBI:128753"/>
    </ligand>
</feature>
<feature type="binding site" evidence="1">
    <location>
        <position position="193"/>
    </location>
    <ligand>
        <name>[4Fe-4S] cluster</name>
        <dbReference type="ChEBI" id="CHEBI:49883"/>
    </ligand>
</feature>
<feature type="binding site" evidence="1">
    <location>
        <position position="221"/>
    </location>
    <ligand>
        <name>(2E)-4-hydroxy-3-methylbut-2-enyl diphosphate</name>
        <dbReference type="ChEBI" id="CHEBI:128753"/>
    </ligand>
</feature>
<feature type="binding site" evidence="1">
    <location>
        <position position="221"/>
    </location>
    <ligand>
        <name>dimethylallyl diphosphate</name>
        <dbReference type="ChEBI" id="CHEBI:57623"/>
    </ligand>
</feature>
<feature type="binding site" evidence="1">
    <location>
        <position position="221"/>
    </location>
    <ligand>
        <name>isopentenyl diphosphate</name>
        <dbReference type="ChEBI" id="CHEBI:128769"/>
    </ligand>
</feature>
<feature type="binding site" evidence="1">
    <location>
        <position position="223"/>
    </location>
    <ligand>
        <name>(2E)-4-hydroxy-3-methylbut-2-enyl diphosphate</name>
        <dbReference type="ChEBI" id="CHEBI:128753"/>
    </ligand>
</feature>
<feature type="binding site" evidence="1">
    <location>
        <position position="223"/>
    </location>
    <ligand>
        <name>dimethylallyl diphosphate</name>
        <dbReference type="ChEBI" id="CHEBI:57623"/>
    </ligand>
</feature>
<feature type="binding site" evidence="1">
    <location>
        <position position="223"/>
    </location>
    <ligand>
        <name>isopentenyl diphosphate</name>
        <dbReference type="ChEBI" id="CHEBI:128769"/>
    </ligand>
</feature>
<feature type="binding site" evidence="1">
    <location>
        <position position="264"/>
    </location>
    <ligand>
        <name>(2E)-4-hydroxy-3-methylbut-2-enyl diphosphate</name>
        <dbReference type="ChEBI" id="CHEBI:128753"/>
    </ligand>
</feature>
<feature type="binding site" evidence="1">
    <location>
        <position position="264"/>
    </location>
    <ligand>
        <name>dimethylallyl diphosphate</name>
        <dbReference type="ChEBI" id="CHEBI:57623"/>
    </ligand>
</feature>
<feature type="binding site" evidence="1">
    <location>
        <position position="264"/>
    </location>
    <ligand>
        <name>isopentenyl diphosphate</name>
        <dbReference type="ChEBI" id="CHEBI:128769"/>
    </ligand>
</feature>
<evidence type="ECO:0000255" key="1">
    <source>
        <dbReference type="HAMAP-Rule" id="MF_00191"/>
    </source>
</evidence>
<keyword id="KW-0004">4Fe-4S</keyword>
<keyword id="KW-0408">Iron</keyword>
<keyword id="KW-0411">Iron-sulfur</keyword>
<keyword id="KW-0414">Isoprene biosynthesis</keyword>
<keyword id="KW-0479">Metal-binding</keyword>
<keyword id="KW-0560">Oxidoreductase</keyword>
<protein>
    <recommendedName>
        <fullName evidence="1">4-hydroxy-3-methylbut-2-enyl diphosphate reductase</fullName>
        <shortName evidence="1">HMBPP reductase</shortName>
        <ecNumber evidence="1">1.17.7.4</ecNumber>
    </recommendedName>
</protein>
<reference key="1">
    <citation type="journal article" date="2005" name="Nat. Biotechnol.">
        <title>Genome sequence of the chlorinated compound-respiring bacterium Dehalococcoides species strain CBDB1.</title>
        <authorList>
            <person name="Kube M."/>
            <person name="Beck A."/>
            <person name="Zinder S.H."/>
            <person name="Kuhl H."/>
            <person name="Reinhardt R."/>
            <person name="Adrian L."/>
        </authorList>
    </citation>
    <scope>NUCLEOTIDE SEQUENCE [LARGE SCALE GENOMIC DNA]</scope>
    <source>
        <strain>CBDB1</strain>
    </source>
</reference>
<gene>
    <name evidence="1" type="primary">ispH</name>
    <name type="ordered locus">cbdbA1294</name>
</gene>
<sequence>MKVECASNIGFCFGVRRAINILEKTASERGGVETLGALVHNQQVLNRLSGMGVRVVKNIDDISGRTVAISSHGVGPAVLAELKSKGLEIVDTTCPFVKRAQVAAKRFHDAGFFTVIYGDVNHPEVKGILGWAGGNGLATLNPQGLDDIPDLSRYIGVLSQTTQIPTGFTSFVKNVIDQALVKDAEIRIADTLCHDIRDRQAAALELAGRVDLMLVIGGHNSANTRHLLDLCKTVSNTHLIETASELQTDWLKGVSRIGITSGASTDETTISEVCSYLDRLSAGA</sequence>